<gene>
    <name evidence="1" type="primary">nagB</name>
    <name type="ordered locus">CPR_2431</name>
</gene>
<feature type="chain" id="PRO_1000066973" description="Glucosamine-6-phosphate deaminase">
    <location>
        <begin position="1"/>
        <end position="242"/>
    </location>
</feature>
<feature type="active site" description="Proton acceptor; for enolization step" evidence="1">
    <location>
        <position position="67"/>
    </location>
</feature>
<feature type="active site" description="For ring-opening step" evidence="1">
    <location>
        <position position="136"/>
    </location>
</feature>
<feature type="active site" description="Proton acceptor; for ring-opening step" evidence="1">
    <location>
        <position position="138"/>
    </location>
</feature>
<feature type="active site" description="For ring-opening step" evidence="1">
    <location>
        <position position="143"/>
    </location>
</feature>
<organism>
    <name type="scientific">Clostridium perfringens (strain SM101 / Type A)</name>
    <dbReference type="NCBI Taxonomy" id="289380"/>
    <lineage>
        <taxon>Bacteria</taxon>
        <taxon>Bacillati</taxon>
        <taxon>Bacillota</taxon>
        <taxon>Clostridia</taxon>
        <taxon>Eubacteriales</taxon>
        <taxon>Clostridiaceae</taxon>
        <taxon>Clostridium</taxon>
    </lineage>
</organism>
<evidence type="ECO:0000255" key="1">
    <source>
        <dbReference type="HAMAP-Rule" id="MF_01241"/>
    </source>
</evidence>
<accession>Q0SQB4</accession>
<name>NAGB_CLOPS</name>
<dbReference type="EC" id="3.5.99.6" evidence="1"/>
<dbReference type="EMBL" id="CP000312">
    <property type="protein sequence ID" value="ABG87276.1"/>
    <property type="molecule type" value="Genomic_DNA"/>
</dbReference>
<dbReference type="RefSeq" id="WP_011593152.1">
    <property type="nucleotide sequence ID" value="NC_008262.1"/>
</dbReference>
<dbReference type="SMR" id="Q0SQB4"/>
<dbReference type="KEGG" id="cpr:CPR_2431"/>
<dbReference type="UniPathway" id="UPA00629">
    <property type="reaction ID" value="UER00684"/>
</dbReference>
<dbReference type="Proteomes" id="UP000001824">
    <property type="component" value="Chromosome"/>
</dbReference>
<dbReference type="GO" id="GO:0005737">
    <property type="term" value="C:cytoplasm"/>
    <property type="evidence" value="ECO:0007669"/>
    <property type="project" value="TreeGrafter"/>
</dbReference>
<dbReference type="GO" id="GO:0004342">
    <property type="term" value="F:glucosamine-6-phosphate deaminase activity"/>
    <property type="evidence" value="ECO:0007669"/>
    <property type="project" value="UniProtKB-UniRule"/>
</dbReference>
<dbReference type="GO" id="GO:0042802">
    <property type="term" value="F:identical protein binding"/>
    <property type="evidence" value="ECO:0007669"/>
    <property type="project" value="TreeGrafter"/>
</dbReference>
<dbReference type="GO" id="GO:0005975">
    <property type="term" value="P:carbohydrate metabolic process"/>
    <property type="evidence" value="ECO:0007669"/>
    <property type="project" value="InterPro"/>
</dbReference>
<dbReference type="GO" id="GO:0006043">
    <property type="term" value="P:glucosamine catabolic process"/>
    <property type="evidence" value="ECO:0007669"/>
    <property type="project" value="TreeGrafter"/>
</dbReference>
<dbReference type="GO" id="GO:0006046">
    <property type="term" value="P:N-acetylglucosamine catabolic process"/>
    <property type="evidence" value="ECO:0007669"/>
    <property type="project" value="TreeGrafter"/>
</dbReference>
<dbReference type="GO" id="GO:0019262">
    <property type="term" value="P:N-acetylneuraminate catabolic process"/>
    <property type="evidence" value="ECO:0007669"/>
    <property type="project" value="UniProtKB-UniRule"/>
</dbReference>
<dbReference type="CDD" id="cd01399">
    <property type="entry name" value="GlcN6P_deaminase"/>
    <property type="match status" value="1"/>
</dbReference>
<dbReference type="FunFam" id="3.40.50.1360:FF:000003">
    <property type="entry name" value="Glucosamine-6-phosphate deaminase"/>
    <property type="match status" value="1"/>
</dbReference>
<dbReference type="Gene3D" id="3.40.50.1360">
    <property type="match status" value="1"/>
</dbReference>
<dbReference type="HAMAP" id="MF_01241">
    <property type="entry name" value="GlcN6P_deamin"/>
    <property type="match status" value="1"/>
</dbReference>
<dbReference type="InterPro" id="IPR006148">
    <property type="entry name" value="Glc/Gal-6P_isomerase"/>
</dbReference>
<dbReference type="InterPro" id="IPR004547">
    <property type="entry name" value="Glucosamine6P_isomerase"/>
</dbReference>
<dbReference type="InterPro" id="IPR018321">
    <property type="entry name" value="Glucosamine6P_isomerase_CS"/>
</dbReference>
<dbReference type="InterPro" id="IPR037171">
    <property type="entry name" value="NagB/RpiA_transferase-like"/>
</dbReference>
<dbReference type="NCBIfam" id="TIGR00502">
    <property type="entry name" value="nagB"/>
    <property type="match status" value="1"/>
</dbReference>
<dbReference type="PANTHER" id="PTHR11280">
    <property type="entry name" value="GLUCOSAMINE-6-PHOSPHATE ISOMERASE"/>
    <property type="match status" value="1"/>
</dbReference>
<dbReference type="PANTHER" id="PTHR11280:SF5">
    <property type="entry name" value="GLUCOSAMINE-6-PHOSPHATE ISOMERASE"/>
    <property type="match status" value="1"/>
</dbReference>
<dbReference type="Pfam" id="PF01182">
    <property type="entry name" value="Glucosamine_iso"/>
    <property type="match status" value="1"/>
</dbReference>
<dbReference type="SUPFAM" id="SSF100950">
    <property type="entry name" value="NagB/RpiA/CoA transferase-like"/>
    <property type="match status" value="1"/>
</dbReference>
<dbReference type="PROSITE" id="PS01161">
    <property type="entry name" value="GLC_GALNAC_ISOMERASE"/>
    <property type="match status" value="1"/>
</dbReference>
<keyword id="KW-0119">Carbohydrate metabolism</keyword>
<keyword id="KW-0378">Hydrolase</keyword>
<proteinExistence type="inferred from homology"/>
<reference key="1">
    <citation type="journal article" date="2006" name="Genome Res.">
        <title>Skewed genomic variability in strains of the toxigenic bacterial pathogen, Clostridium perfringens.</title>
        <authorList>
            <person name="Myers G.S.A."/>
            <person name="Rasko D.A."/>
            <person name="Cheung J.K."/>
            <person name="Ravel J."/>
            <person name="Seshadri R."/>
            <person name="DeBoy R.T."/>
            <person name="Ren Q."/>
            <person name="Varga J."/>
            <person name="Awad M.M."/>
            <person name="Brinkac L.M."/>
            <person name="Daugherty S.C."/>
            <person name="Haft D.H."/>
            <person name="Dodson R.J."/>
            <person name="Madupu R."/>
            <person name="Nelson W.C."/>
            <person name="Rosovitz M.J."/>
            <person name="Sullivan S.A."/>
            <person name="Khouri H."/>
            <person name="Dimitrov G.I."/>
            <person name="Watkins K.L."/>
            <person name="Mulligan S."/>
            <person name="Benton J."/>
            <person name="Radune D."/>
            <person name="Fisher D.J."/>
            <person name="Atkins H.S."/>
            <person name="Hiscox T."/>
            <person name="Jost B.H."/>
            <person name="Billington S.J."/>
            <person name="Songer J.G."/>
            <person name="McClane B.A."/>
            <person name="Titball R.W."/>
            <person name="Rood J.I."/>
            <person name="Melville S.B."/>
            <person name="Paulsen I.T."/>
        </authorList>
    </citation>
    <scope>NUCLEOTIDE SEQUENCE [LARGE SCALE GENOMIC DNA]</scope>
    <source>
        <strain>SM101 / Type A</strain>
    </source>
</reference>
<protein>
    <recommendedName>
        <fullName evidence="1">Glucosamine-6-phosphate deaminase</fullName>
        <ecNumber evidence="1">3.5.99.6</ecNumber>
    </recommendedName>
    <alternativeName>
        <fullName evidence="1">GlcN6P deaminase</fullName>
        <shortName evidence="1">GNPDA</shortName>
    </alternativeName>
    <alternativeName>
        <fullName evidence="1">Glucosamine-6-phosphate isomerase</fullName>
    </alternativeName>
</protein>
<sequence>MRLIVTKNYEEMSKVAAKEMAEDIKRNPEIVLGLATGGTPVGMYKELIRMYNEGELDFSKVTSINLDEYVGLSGDHDQSYRYFMNTNLFDHINIDKNNTFVPNGLAENVEEECMAYDARIQDIGGIDLQLLGLGANGHIGFNEPGEALSVGTNLTDLKESTIEANARFFDSIDDVPRKAITMGLGGIMKAKKIMVIASGEGKAEVVKAMMSGKITTEIPATMLQMHRDVILIVDEDAAKLLK</sequence>
<comment type="function">
    <text evidence="1">Catalyzes the reversible isomerization-deamination of glucosamine 6-phosphate (GlcN6P) to form fructose 6-phosphate (Fru6P) and ammonium ion.</text>
</comment>
<comment type="catalytic activity">
    <reaction evidence="1">
        <text>alpha-D-glucosamine 6-phosphate + H2O = beta-D-fructose 6-phosphate + NH4(+)</text>
        <dbReference type="Rhea" id="RHEA:12172"/>
        <dbReference type="ChEBI" id="CHEBI:15377"/>
        <dbReference type="ChEBI" id="CHEBI:28938"/>
        <dbReference type="ChEBI" id="CHEBI:57634"/>
        <dbReference type="ChEBI" id="CHEBI:75989"/>
        <dbReference type="EC" id="3.5.99.6"/>
    </reaction>
</comment>
<comment type="pathway">
    <text evidence="1">Amino-sugar metabolism; N-acetylneuraminate degradation; D-fructose 6-phosphate from N-acetylneuraminate: step 5/5.</text>
</comment>
<comment type="similarity">
    <text evidence="1">Belongs to the glucosamine/galactosamine-6-phosphate isomerase family. NagB subfamily.</text>
</comment>